<organism evidence="11">
    <name type="scientific">Arabidopsis thaliana</name>
    <name type="common">Mouse-ear cress</name>
    <dbReference type="NCBI Taxonomy" id="3702"/>
    <lineage>
        <taxon>Eukaryota</taxon>
        <taxon>Viridiplantae</taxon>
        <taxon>Streptophyta</taxon>
        <taxon>Embryophyta</taxon>
        <taxon>Tracheophyta</taxon>
        <taxon>Spermatophyta</taxon>
        <taxon>Magnoliopsida</taxon>
        <taxon>eudicotyledons</taxon>
        <taxon>Gunneridae</taxon>
        <taxon>Pentapetalae</taxon>
        <taxon>rosids</taxon>
        <taxon>malvids</taxon>
        <taxon>Brassicales</taxon>
        <taxon>Brassicaceae</taxon>
        <taxon>Camelineae</taxon>
        <taxon>Arabidopsis</taxon>
    </lineage>
</organism>
<comment type="function">
    <text evidence="6 8">As a member of the SWAP1-SFPS-RRC1 splicing factor complex, modulates photomorphogenesis by regulating the gene expression and pre-messenger RNA (mRNA) alternative splicing of a large number of genes, including those involved in plant responses to light signaling (PubMed:36282917). SR-like splicing factor required for phytochrome B (phyB) signal transduction and involved in phyB-dependent alternative splicing (PubMed:22324426, PubMed:36282917).</text>
</comment>
<comment type="subunit">
    <text evidence="8">Component of the SWAP1-SFPS-RRC1 splicing factor complex which modulates pre-mRNA splicing to promote photomorphogenesis (PubMed:36282917). Interacts with SWAP1 in a light-independent manner (PubMed:36282917).</text>
</comment>
<comment type="subcellular location">
    <subcellularLocation>
        <location evidence="6 8">Nucleus speckle</location>
    </subcellularLocation>
</comment>
<comment type="tissue specificity">
    <text evidence="6">Expressed in leaves, inflorescence stems, roots, flower buds, open flowers and siliques.</text>
</comment>
<comment type="domain">
    <text evidence="7">The RS domain (871-946) is required for phytochrome B signal transduction through alternative splicing regulation.</text>
</comment>
<comment type="disruption phenotype">
    <text evidence="6 8">Dwarfism and sterile flowers when homozygous and semi-sterility when heterozygous under normal growth conditions (PubMed:22324426). Reduced inhibition of hypocotyl elongation under continuous red light (PubMed:22324426, PubMed:36282917). Plants lacking SWAP1, RRC1 and DRT111/RSN2/SFPS have pleiotropic phenotypes due to altered alternative splicing of many pre-messenger RNA (mRNA) (PubMed:36282917).</text>
</comment>
<protein>
    <recommendedName>
        <fullName evidence="9">Protein RRC1</fullName>
    </recommendedName>
    <alternativeName>
        <fullName evidence="9">Reduced red-light responses in cry1cry2 background 1</fullName>
    </alternativeName>
</protein>
<evidence type="ECO:0000255" key="1">
    <source>
        <dbReference type="PROSITE-ProRule" id="PRU00176"/>
    </source>
</evidence>
<evidence type="ECO:0000255" key="2">
    <source>
        <dbReference type="PROSITE-ProRule" id="PRU00186"/>
    </source>
</evidence>
<evidence type="ECO:0000255" key="3">
    <source>
        <dbReference type="PROSITE-ProRule" id="PRU00263"/>
    </source>
</evidence>
<evidence type="ECO:0000255" key="4">
    <source>
        <dbReference type="PROSITE-ProRule" id="PRU00724"/>
    </source>
</evidence>
<evidence type="ECO:0000256" key="5">
    <source>
        <dbReference type="SAM" id="MobiDB-lite"/>
    </source>
</evidence>
<evidence type="ECO:0000269" key="6">
    <source>
    </source>
</evidence>
<evidence type="ECO:0000269" key="7">
    <source>
    </source>
</evidence>
<evidence type="ECO:0000269" key="8">
    <source>
    </source>
</evidence>
<evidence type="ECO:0000303" key="9">
    <source>
    </source>
</evidence>
<evidence type="ECO:0000312" key="10">
    <source>
        <dbReference type="Araport" id="AT5G25060"/>
    </source>
</evidence>
<evidence type="ECO:0000312" key="11">
    <source>
        <dbReference type="EMBL" id="AAK25922.1"/>
    </source>
</evidence>
<evidence type="ECO:0000312" key="12">
    <source>
        <dbReference type="EMBL" id="AC005964"/>
    </source>
</evidence>
<evidence type="ECO:0007829" key="13">
    <source>
        <dbReference type="PDB" id="2E62"/>
    </source>
</evidence>
<name>RRC1_ARATH</name>
<proteinExistence type="evidence at protein level"/>
<accession>Q9C5J3</accession>
<keyword id="KW-0002">3D-structure</keyword>
<keyword id="KW-0507">mRNA processing</keyword>
<keyword id="KW-0508">mRNA splicing</keyword>
<keyword id="KW-0539">Nucleus</keyword>
<keyword id="KW-1185">Reference proteome</keyword>
<keyword id="KW-0694">RNA-binding</keyword>
<gene>
    <name evidence="9" type="primary">RRC1</name>
    <name evidence="10" type="ordered locus">At5g25060</name>
    <name evidence="12" type="ORF">T11H3.70</name>
</gene>
<feature type="chain" id="PRO_0000436038" description="Protein RRC1">
    <location>
        <begin position="1"/>
        <end position="946"/>
    </location>
</feature>
<feature type="domain" description="RRM" evidence="1">
    <location>
        <begin position="179"/>
        <end position="260"/>
    </location>
</feature>
<feature type="repeat" description="SURP motif" evidence="3">
    <location>
        <begin position="329"/>
        <end position="372"/>
    </location>
</feature>
<feature type="domain" description="CID" evidence="4">
    <location>
        <begin position="437"/>
        <end position="582"/>
    </location>
</feature>
<feature type="domain" description="SAP" evidence="2">
    <location>
        <begin position="631"/>
        <end position="665"/>
    </location>
</feature>
<feature type="region of interest" description="Disordered" evidence="5">
    <location>
        <begin position="1"/>
        <end position="29"/>
    </location>
</feature>
<feature type="region of interest" description="Disordered" evidence="5">
    <location>
        <begin position="41"/>
        <end position="183"/>
    </location>
</feature>
<feature type="region of interest" description="Disordered" evidence="5">
    <location>
        <begin position="740"/>
        <end position="797"/>
    </location>
</feature>
<feature type="region of interest" description="Disordered" evidence="5">
    <location>
        <begin position="836"/>
        <end position="946"/>
    </location>
</feature>
<feature type="compositionally biased region" description="Basic and acidic residues" evidence="5">
    <location>
        <begin position="15"/>
        <end position="29"/>
    </location>
</feature>
<feature type="compositionally biased region" description="Basic and acidic residues" evidence="5">
    <location>
        <begin position="62"/>
        <end position="75"/>
    </location>
</feature>
<feature type="compositionally biased region" description="Basic and acidic residues" evidence="5">
    <location>
        <begin position="98"/>
        <end position="147"/>
    </location>
</feature>
<feature type="compositionally biased region" description="Polar residues" evidence="5">
    <location>
        <begin position="757"/>
        <end position="767"/>
    </location>
</feature>
<feature type="compositionally biased region" description="Basic and acidic residues" evidence="5">
    <location>
        <begin position="772"/>
        <end position="781"/>
    </location>
</feature>
<feature type="compositionally biased region" description="Basic and acidic residues" evidence="5">
    <location>
        <begin position="854"/>
        <end position="868"/>
    </location>
</feature>
<feature type="compositionally biased region" description="Basic and acidic residues" evidence="5">
    <location>
        <begin position="886"/>
        <end position="946"/>
    </location>
</feature>
<feature type="helix" evidence="13">
    <location>
        <begin position="792"/>
        <end position="816"/>
    </location>
</feature>
<feature type="helix" evidence="13">
    <location>
        <begin position="821"/>
        <end position="838"/>
    </location>
</feature>
<dbReference type="EMBL" id="AC005964">
    <property type="status" value="NOT_ANNOTATED_CDS"/>
    <property type="molecule type" value="Genomic_DNA"/>
</dbReference>
<dbReference type="EMBL" id="CP002688">
    <property type="protein sequence ID" value="AED93395.1"/>
    <property type="molecule type" value="Genomic_DNA"/>
</dbReference>
<dbReference type="EMBL" id="AF360212">
    <property type="protein sequence ID" value="AAK25922.1"/>
    <property type="molecule type" value="mRNA"/>
</dbReference>
<dbReference type="EMBL" id="AY040060">
    <property type="protein sequence ID" value="AAK64118.1"/>
    <property type="molecule type" value="mRNA"/>
</dbReference>
<dbReference type="RefSeq" id="NP_568464.1">
    <property type="nucleotide sequence ID" value="NM_122415.2"/>
</dbReference>
<dbReference type="PDB" id="2E62">
    <property type="method" value="NMR"/>
    <property type="chains" value="A=789-842"/>
</dbReference>
<dbReference type="PDBsum" id="2E62"/>
<dbReference type="SMR" id="Q9C5J3"/>
<dbReference type="FunCoup" id="Q9C5J3">
    <property type="interactions" value="4551"/>
</dbReference>
<dbReference type="IntAct" id="Q9C5J3">
    <property type="interactions" value="2"/>
</dbReference>
<dbReference type="STRING" id="3702.Q9C5J3"/>
<dbReference type="iPTMnet" id="Q9C5J3"/>
<dbReference type="PaxDb" id="3702-AT5G25060.1"/>
<dbReference type="ProteomicsDB" id="236266"/>
<dbReference type="EnsemblPlants" id="AT5G25060.1">
    <property type="protein sequence ID" value="AT5G25060.1"/>
    <property type="gene ID" value="AT5G25060"/>
</dbReference>
<dbReference type="GeneID" id="832577"/>
<dbReference type="Gramene" id="AT5G25060.1">
    <property type="protein sequence ID" value="AT5G25060.1"/>
    <property type="gene ID" value="AT5G25060"/>
</dbReference>
<dbReference type="KEGG" id="ath:AT5G25060"/>
<dbReference type="Araport" id="AT5G25060"/>
<dbReference type="TAIR" id="AT5G25060">
    <property type="gene designation" value="RRC1"/>
</dbReference>
<dbReference type="eggNOG" id="KOG0151">
    <property type="taxonomic scope" value="Eukaryota"/>
</dbReference>
<dbReference type="HOGENOM" id="CLU_010743_2_0_1"/>
<dbReference type="InParanoid" id="Q9C5J3"/>
<dbReference type="OMA" id="RRPHICA"/>
<dbReference type="OrthoDB" id="377209at2759"/>
<dbReference type="PhylomeDB" id="Q9C5J3"/>
<dbReference type="EvolutionaryTrace" id="Q9C5J3"/>
<dbReference type="PRO" id="PR:Q9C5J3"/>
<dbReference type="Proteomes" id="UP000006548">
    <property type="component" value="Chromosome 5"/>
</dbReference>
<dbReference type="ExpressionAtlas" id="Q9C5J3">
    <property type="expression patterns" value="baseline and differential"/>
</dbReference>
<dbReference type="GO" id="GO:0016607">
    <property type="term" value="C:nuclear speck"/>
    <property type="evidence" value="ECO:0000314"/>
    <property type="project" value="UniProtKB"/>
</dbReference>
<dbReference type="GO" id="GO:0003723">
    <property type="term" value="F:RNA binding"/>
    <property type="evidence" value="ECO:0007669"/>
    <property type="project" value="UniProtKB-KW"/>
</dbReference>
<dbReference type="GO" id="GO:0006397">
    <property type="term" value="P:mRNA processing"/>
    <property type="evidence" value="ECO:0007669"/>
    <property type="project" value="UniProtKB-KW"/>
</dbReference>
<dbReference type="GO" id="GO:0010017">
    <property type="term" value="P:red or far-red light signaling pathway"/>
    <property type="evidence" value="ECO:0000315"/>
    <property type="project" value="UniProtKB"/>
</dbReference>
<dbReference type="GO" id="GO:0010099">
    <property type="term" value="P:regulation of photomorphogenesis"/>
    <property type="evidence" value="ECO:0000315"/>
    <property type="project" value="UniProtKB"/>
</dbReference>
<dbReference type="GO" id="GO:0043484">
    <property type="term" value="P:regulation of RNA splicing"/>
    <property type="evidence" value="ECO:0000315"/>
    <property type="project" value="UniProtKB"/>
</dbReference>
<dbReference type="GO" id="GO:0010114">
    <property type="term" value="P:response to red light"/>
    <property type="evidence" value="ECO:0000315"/>
    <property type="project" value="UniProtKB"/>
</dbReference>
<dbReference type="GO" id="GO:0006396">
    <property type="term" value="P:RNA processing"/>
    <property type="evidence" value="ECO:0000315"/>
    <property type="project" value="UniProtKB"/>
</dbReference>
<dbReference type="GO" id="GO:0008380">
    <property type="term" value="P:RNA splicing"/>
    <property type="evidence" value="ECO:0007669"/>
    <property type="project" value="UniProtKB-KW"/>
</dbReference>
<dbReference type="CDD" id="cd21371">
    <property type="entry name" value="cwf21_RRC1-like"/>
    <property type="match status" value="1"/>
</dbReference>
<dbReference type="CDD" id="cd12223">
    <property type="entry name" value="RRM_SR140"/>
    <property type="match status" value="1"/>
</dbReference>
<dbReference type="Gene3D" id="1.25.40.90">
    <property type="match status" value="1"/>
</dbReference>
<dbReference type="Gene3D" id="3.30.70.330">
    <property type="match status" value="1"/>
</dbReference>
<dbReference type="Gene3D" id="6.10.140.420">
    <property type="match status" value="1"/>
</dbReference>
<dbReference type="Gene3D" id="1.10.10.790">
    <property type="entry name" value="Surp module"/>
    <property type="match status" value="1"/>
</dbReference>
<dbReference type="InterPro" id="IPR006569">
    <property type="entry name" value="CID_dom"/>
</dbReference>
<dbReference type="InterPro" id="IPR008942">
    <property type="entry name" value="ENTH_VHS"/>
</dbReference>
<dbReference type="InterPro" id="IPR013170">
    <property type="entry name" value="mRNA_splic_Cwf21_dom"/>
</dbReference>
<dbReference type="InterPro" id="IPR012677">
    <property type="entry name" value="Nucleotide-bd_a/b_plait_sf"/>
</dbReference>
<dbReference type="InterPro" id="IPR035979">
    <property type="entry name" value="RBD_domain_sf"/>
</dbReference>
<dbReference type="InterPro" id="IPR047491">
    <property type="entry name" value="RRC1-like_cwf21"/>
</dbReference>
<dbReference type="InterPro" id="IPR000504">
    <property type="entry name" value="RRM_dom"/>
</dbReference>
<dbReference type="InterPro" id="IPR003034">
    <property type="entry name" value="SAP_dom"/>
</dbReference>
<dbReference type="InterPro" id="IPR051485">
    <property type="entry name" value="SR-CTD_assoc_factor"/>
</dbReference>
<dbReference type="InterPro" id="IPR035009">
    <property type="entry name" value="SR140_RRM"/>
</dbReference>
<dbReference type="InterPro" id="IPR000061">
    <property type="entry name" value="Surp"/>
</dbReference>
<dbReference type="InterPro" id="IPR035967">
    <property type="entry name" value="SWAP/Surp_sf"/>
</dbReference>
<dbReference type="PANTHER" id="PTHR23140">
    <property type="entry name" value="RNA PROCESSING PROTEIN LD23810P"/>
    <property type="match status" value="1"/>
</dbReference>
<dbReference type="PANTHER" id="PTHR23140:SF0">
    <property type="entry name" value="U2 SNRNP-ASSOCIATED SURP MOTIF-CONTAINING PROTEIN"/>
    <property type="match status" value="1"/>
</dbReference>
<dbReference type="Pfam" id="PF04818">
    <property type="entry name" value="CID"/>
    <property type="match status" value="1"/>
</dbReference>
<dbReference type="Pfam" id="PF08312">
    <property type="entry name" value="cwf21"/>
    <property type="match status" value="1"/>
</dbReference>
<dbReference type="Pfam" id="PF00076">
    <property type="entry name" value="RRM_1"/>
    <property type="match status" value="1"/>
</dbReference>
<dbReference type="Pfam" id="PF01805">
    <property type="entry name" value="Surp"/>
    <property type="match status" value="1"/>
</dbReference>
<dbReference type="SMART" id="SM01115">
    <property type="entry name" value="cwf21"/>
    <property type="match status" value="1"/>
</dbReference>
<dbReference type="SMART" id="SM00582">
    <property type="entry name" value="RPR"/>
    <property type="match status" value="1"/>
</dbReference>
<dbReference type="SMART" id="SM00360">
    <property type="entry name" value="RRM"/>
    <property type="match status" value="1"/>
</dbReference>
<dbReference type="SMART" id="SM00648">
    <property type="entry name" value="SWAP"/>
    <property type="match status" value="1"/>
</dbReference>
<dbReference type="SUPFAM" id="SSF48464">
    <property type="entry name" value="ENTH/VHS domain"/>
    <property type="match status" value="1"/>
</dbReference>
<dbReference type="SUPFAM" id="SSF54928">
    <property type="entry name" value="RNA-binding domain, RBD"/>
    <property type="match status" value="1"/>
</dbReference>
<dbReference type="SUPFAM" id="SSF109905">
    <property type="entry name" value="Surp module (SWAP domain)"/>
    <property type="match status" value="1"/>
</dbReference>
<dbReference type="PROSITE" id="PS51391">
    <property type="entry name" value="CID"/>
    <property type="match status" value="1"/>
</dbReference>
<dbReference type="PROSITE" id="PS50102">
    <property type="entry name" value="RRM"/>
    <property type="match status" value="1"/>
</dbReference>
<dbReference type="PROSITE" id="PS50800">
    <property type="entry name" value="SAP"/>
    <property type="match status" value="1"/>
</dbReference>
<dbReference type="PROSITE" id="PS50128">
    <property type="entry name" value="SURP"/>
    <property type="match status" value="1"/>
</dbReference>
<reference key="1">
    <citation type="journal article" date="2000" name="Nature">
        <title>Sequence and analysis of chromosome 5 of the plant Arabidopsis thaliana.</title>
        <authorList>
            <person name="Tabata S."/>
            <person name="Kaneko T."/>
            <person name="Nakamura Y."/>
            <person name="Kotani H."/>
            <person name="Kato T."/>
            <person name="Asamizu E."/>
            <person name="Miyajima N."/>
            <person name="Sasamoto S."/>
            <person name="Kimura T."/>
            <person name="Hosouchi T."/>
            <person name="Kawashima K."/>
            <person name="Kohara M."/>
            <person name="Matsumoto M."/>
            <person name="Matsuno A."/>
            <person name="Muraki A."/>
            <person name="Nakayama S."/>
            <person name="Nakazaki N."/>
            <person name="Naruo K."/>
            <person name="Okumura S."/>
            <person name="Shinpo S."/>
            <person name="Takeuchi C."/>
            <person name="Wada T."/>
            <person name="Watanabe A."/>
            <person name="Yamada M."/>
            <person name="Yasuda M."/>
            <person name="Sato S."/>
            <person name="de la Bastide M."/>
            <person name="Huang E."/>
            <person name="Spiegel L."/>
            <person name="Gnoj L."/>
            <person name="O'Shaughnessy A."/>
            <person name="Preston R."/>
            <person name="Habermann K."/>
            <person name="Murray J."/>
            <person name="Johnson D."/>
            <person name="Rohlfing T."/>
            <person name="Nelson J."/>
            <person name="Stoneking T."/>
            <person name="Pepin K."/>
            <person name="Spieth J."/>
            <person name="Sekhon M."/>
            <person name="Armstrong J."/>
            <person name="Becker M."/>
            <person name="Belter E."/>
            <person name="Cordum H."/>
            <person name="Cordes M."/>
            <person name="Courtney L."/>
            <person name="Courtney W."/>
            <person name="Dante M."/>
            <person name="Du H."/>
            <person name="Edwards J."/>
            <person name="Fryman J."/>
            <person name="Haakensen B."/>
            <person name="Lamar E."/>
            <person name="Latreille P."/>
            <person name="Leonard S."/>
            <person name="Meyer R."/>
            <person name="Mulvaney E."/>
            <person name="Ozersky P."/>
            <person name="Riley A."/>
            <person name="Strowmatt C."/>
            <person name="Wagner-McPherson C."/>
            <person name="Wollam A."/>
            <person name="Yoakum M."/>
            <person name="Bell M."/>
            <person name="Dedhia N."/>
            <person name="Parnell L."/>
            <person name="Shah R."/>
            <person name="Rodriguez M."/>
            <person name="Hoon See L."/>
            <person name="Vil D."/>
            <person name="Baker J."/>
            <person name="Kirchoff K."/>
            <person name="Toth K."/>
            <person name="King L."/>
            <person name="Bahret A."/>
            <person name="Miller B."/>
            <person name="Marra M.A."/>
            <person name="Martienssen R."/>
            <person name="McCombie W.R."/>
            <person name="Wilson R.K."/>
            <person name="Murphy G."/>
            <person name="Bancroft I."/>
            <person name="Volckaert G."/>
            <person name="Wambutt R."/>
            <person name="Duesterhoeft A."/>
            <person name="Stiekema W."/>
            <person name="Pohl T."/>
            <person name="Entian K.-D."/>
            <person name="Terryn N."/>
            <person name="Hartley N."/>
            <person name="Bent E."/>
            <person name="Johnson S."/>
            <person name="Langham S.-A."/>
            <person name="McCullagh B."/>
            <person name="Robben J."/>
            <person name="Grymonprez B."/>
            <person name="Zimmermann W."/>
            <person name="Ramsperger U."/>
            <person name="Wedler H."/>
            <person name="Balke K."/>
            <person name="Wedler E."/>
            <person name="Peters S."/>
            <person name="van Staveren M."/>
            <person name="Dirkse W."/>
            <person name="Mooijman P."/>
            <person name="Klein Lankhorst R."/>
            <person name="Weitzenegger T."/>
            <person name="Bothe G."/>
            <person name="Rose M."/>
            <person name="Hauf J."/>
            <person name="Berneiser S."/>
            <person name="Hempel S."/>
            <person name="Feldpausch M."/>
            <person name="Lamberth S."/>
            <person name="Villarroel R."/>
            <person name="Gielen J."/>
            <person name="Ardiles W."/>
            <person name="Bents O."/>
            <person name="Lemcke K."/>
            <person name="Kolesov G."/>
            <person name="Mayer K.F.X."/>
            <person name="Rudd S."/>
            <person name="Schoof H."/>
            <person name="Schueller C."/>
            <person name="Zaccaria P."/>
            <person name="Mewes H.-W."/>
            <person name="Bevan M."/>
            <person name="Fransz P.F."/>
        </authorList>
    </citation>
    <scope>NUCLEOTIDE SEQUENCE [LARGE SCALE GENOMIC DNA]</scope>
    <source>
        <strain>cv. Columbia</strain>
    </source>
</reference>
<reference key="2">
    <citation type="journal article" date="2017" name="Plant J.">
        <title>Araport11: a complete reannotation of the Arabidopsis thaliana reference genome.</title>
        <authorList>
            <person name="Cheng C.Y."/>
            <person name="Krishnakumar V."/>
            <person name="Chan A.P."/>
            <person name="Thibaud-Nissen F."/>
            <person name="Schobel S."/>
            <person name="Town C.D."/>
        </authorList>
    </citation>
    <scope>GENOME REANNOTATION</scope>
    <source>
        <strain>cv. Columbia</strain>
    </source>
</reference>
<reference key="3">
    <citation type="journal article" date="2003" name="Science">
        <title>Empirical analysis of transcriptional activity in the Arabidopsis genome.</title>
        <authorList>
            <person name="Yamada K."/>
            <person name="Lim J."/>
            <person name="Dale J.M."/>
            <person name="Chen H."/>
            <person name="Shinn P."/>
            <person name="Palm C.J."/>
            <person name="Southwick A.M."/>
            <person name="Wu H.C."/>
            <person name="Kim C.J."/>
            <person name="Nguyen M."/>
            <person name="Pham P.K."/>
            <person name="Cheuk R.F."/>
            <person name="Karlin-Newmann G."/>
            <person name="Liu S.X."/>
            <person name="Lam B."/>
            <person name="Sakano H."/>
            <person name="Wu T."/>
            <person name="Yu G."/>
            <person name="Miranda M."/>
            <person name="Quach H.L."/>
            <person name="Tripp M."/>
            <person name="Chang C.H."/>
            <person name="Lee J.M."/>
            <person name="Toriumi M.J."/>
            <person name="Chan M.M."/>
            <person name="Tang C.C."/>
            <person name="Onodera C.S."/>
            <person name="Deng J.M."/>
            <person name="Akiyama K."/>
            <person name="Ansari Y."/>
            <person name="Arakawa T."/>
            <person name="Banh J."/>
            <person name="Banno F."/>
            <person name="Bowser L."/>
            <person name="Brooks S.Y."/>
            <person name="Carninci P."/>
            <person name="Chao Q."/>
            <person name="Choy N."/>
            <person name="Enju A."/>
            <person name="Goldsmith A.D."/>
            <person name="Gurjal M."/>
            <person name="Hansen N.F."/>
            <person name="Hayashizaki Y."/>
            <person name="Johnson-Hopson C."/>
            <person name="Hsuan V.W."/>
            <person name="Iida K."/>
            <person name="Karnes M."/>
            <person name="Khan S."/>
            <person name="Koesema E."/>
            <person name="Ishida J."/>
            <person name="Jiang P.X."/>
            <person name="Jones T."/>
            <person name="Kawai J."/>
            <person name="Kamiya A."/>
            <person name="Meyers C."/>
            <person name="Nakajima M."/>
            <person name="Narusaka M."/>
            <person name="Seki M."/>
            <person name="Sakurai T."/>
            <person name="Satou M."/>
            <person name="Tamse R."/>
            <person name="Vaysberg M."/>
            <person name="Wallender E.K."/>
            <person name="Wong C."/>
            <person name="Yamamura Y."/>
            <person name="Yuan S."/>
            <person name="Shinozaki K."/>
            <person name="Davis R.W."/>
            <person name="Theologis A."/>
            <person name="Ecker J.R."/>
        </authorList>
    </citation>
    <scope>NUCLEOTIDE SEQUENCE [LARGE SCALE MRNA]</scope>
    <source>
        <strain>cv. Columbia</strain>
    </source>
</reference>
<reference key="4">
    <citation type="journal article" date="2012" name="Plant J.">
        <title>The RS domain of Arabidopsis splicing factor RRC1 is required for phytochrome B signal transduction.</title>
        <authorList>
            <person name="Shikata H."/>
            <person name="Shibata M."/>
            <person name="Ushijima T."/>
            <person name="Nakashima M."/>
            <person name="Kong S.G."/>
            <person name="Matsuoka K."/>
            <person name="Lin C."/>
            <person name="Matsushita T."/>
        </authorList>
    </citation>
    <scope>FUNCTION</scope>
    <scope>DISRUPTION PHENOTYPE</scope>
    <scope>TISSUE SPECIFICITY</scope>
    <scope>SUBCELLULAR LOCATION</scope>
</reference>
<reference key="5">
    <citation type="journal article" date="2012" name="Plant Signal. Behav.">
        <title>Deletion of the RS domain of RRC1 impairs phytochrome B signaling in Arabidopsis.</title>
        <authorList>
            <person name="Shikata H."/>
            <person name="Nakashima M."/>
            <person name="Matsuoka K."/>
            <person name="Matsushita T."/>
        </authorList>
    </citation>
    <scope>DOMAIN</scope>
</reference>
<reference key="6">
    <citation type="journal article" date="2022" name="Proc. Natl. Acad. Sci. U.S.A.">
        <title>SWAP1-SFPS-RRC1 splicing factor complex modulates pre-mRNA splicing to promote photomorphogenesis in Arabidopsis.</title>
        <authorList>
            <person name="Kathare P.K."/>
            <person name="Xin R."/>
            <person name="Ganesan A.S."/>
            <person name="June V.M."/>
            <person name="Reddy A.S.N."/>
            <person name="Huq E."/>
        </authorList>
    </citation>
    <scope>FUNCTION</scope>
    <scope>DISRUPTION PHENOTYPE</scope>
    <scope>SUBUNIT</scope>
    <scope>INTERACTION WITH SWAP1</scope>
    <scope>SUBCELLULAR LOCATION</scope>
    <source>
        <strain>cv. Columbia</strain>
    </source>
</reference>
<reference key="7">
    <citation type="submission" date="2006-12" db="PDB data bank">
        <title>Solution structure of the cwf21 domain in protein AAK25922.</title>
        <authorList>
            <person name="He F."/>
            <person name="Muto Y."/>
            <person name="Inoue M."/>
            <person name="Kigawa T."/>
            <person name="Shirouzu M."/>
            <person name="Terada T."/>
            <person name="Yokoyama S."/>
        </authorList>
    </citation>
    <scope>STRUCTURE BY NMR OF 789-842</scope>
</reference>
<sequence>MSSFSITRKKTPFQKHREEEEARKKKAEDETARLYQEFVESFQGDNATTKTFVRGGTINPGDKPKVDSEGEKSKDGGSVSKKGSRYVPSFLPPPLASKGKEPEKKREEERPREREKGKTRNIDNFMEELKREQEMRERRNQDRDRQGDSSPSSRFDELPDDFDPSGRPGSFDDGDPQTTNLYVGNLSPKVDENFLLRTFGRFGPIASVKIMWPRTDEEKRRQRNCGFVSFMNRADGQAAKDEMQGIIVYEYELKIGWGKAVSLPSQALPAPPPGHMAIRSKEGCNLVFSGQTGPPIITSVPNQNSELVLTPNVPDITVVTPEDEHLRHVIDTLALYVLDGECAFEQAIMERGRGNPLFKFMFELGSKEHTYYVWRLYSFAQGDTLQRWRTEPYIMITGSGRWIPPPLPVTRTQEHEKESASTYAAGRTRRAEVERTLTDPQRDEFEDMLRALTLERSQIKEAMGFALDNADAAGEVVEVLTESLTLKETSIPTKVARLMLVSDILHNSSARVKNASAYRTKFEATLPDIMESFNDLYRSITGRITAEALKERVLKVLQVWADWFLFSDAYIYGLRSTFLRSGVSGVTSFHSICGDAPEIENKSYADNMSDIGKINPDAALAIGKGAARQELMNLPIAELERRCRHNGLSLVGGRVMMVTRLLSLEDTEKQRGYEAVDEIPKHPQNHSTWEEVKSEREHIKNSYAEVEMKEPVNLPTTIPIPQPELKAFVGKEKNELILPASKWARDDDEADDEQKRSSSSGSDNTGGITFKADGEDLKGNDCVRAQPDNGMDEEQRQKRRRIEVALIEYRETLEEQGMKNPEEIERKVEINRKRLEVDYGLSGPNEGNRNQKSIIERKEKREDSQESSKKRHRGENKSQSPPRKSSTRERDHDLGRDRDRERHRDRDRQHDLNRDRDRREKSSSHDRDDNDRSKERDRDWRRRGTR</sequence>